<keyword id="KW-0119">Carbohydrate metabolism</keyword>
<keyword id="KW-0479">Metal-binding</keyword>
<keyword id="KW-0520">NAD</keyword>
<keyword id="KW-0521">NADP</keyword>
<keyword id="KW-0547">Nucleotide-binding</keyword>
<keyword id="KW-0560">Oxidoreductase</keyword>
<keyword id="KW-0614">Plasmid</keyword>
<keyword id="KW-0862">Zinc</keyword>
<sequence>MRAVALFPDEPELRVIEKPKPTPENGEALIRTVAVGIDGSDRRIAAGEIGGDVPDGEDHLVIGHEAVGVVEEPNGTDLARGDVVAPLVRRPVGDGSRFAANGELDMAPPGSFHECGITGAHGYMSEFFTARPGYLVPIPESRAAYGFFVEPASLVEKALDQTEAARSGFDWRPSSAFVLGNGNLGLLALTRLETGDEFERTYCLGRRDRPDPTIDVIENVGGTYVDSRELSLDEFPAVHEPVDFAFETTGHPAHAVEAVDALAPNGVVTLQGIPGSSSTVEIDGGAFHTDLVVTNKAILGVVNARRSHFRAAAEWLAETPESVLDALVTGVYGPDEIDEAFADSAETIKTVVSFDR</sequence>
<comment type="function">
    <text evidence="1">Catalyzes the NAD(P)(+)-dependent oxidation of D-glucose to D-gluconate via gluconolactone. Can utilize both NAD(+) and NADP(+) as electron acceptor. Is involved in the degradation of glucose through a modified Entner-Doudoroff pathway.</text>
</comment>
<comment type="catalytic activity">
    <reaction evidence="1">
        <text>D-glucose + NAD(+) = D-glucono-1,5-lactone + NADH + H(+)</text>
        <dbReference type="Rhea" id="RHEA:14293"/>
        <dbReference type="ChEBI" id="CHEBI:4167"/>
        <dbReference type="ChEBI" id="CHEBI:15378"/>
        <dbReference type="ChEBI" id="CHEBI:16217"/>
        <dbReference type="ChEBI" id="CHEBI:57540"/>
        <dbReference type="ChEBI" id="CHEBI:57945"/>
        <dbReference type="EC" id="1.1.1.47"/>
    </reaction>
</comment>
<comment type="catalytic activity">
    <reaction evidence="1">
        <text>D-glucose + NADP(+) = D-glucono-1,5-lactone + NADPH + H(+)</text>
        <dbReference type="Rhea" id="RHEA:14405"/>
        <dbReference type="ChEBI" id="CHEBI:4167"/>
        <dbReference type="ChEBI" id="CHEBI:15378"/>
        <dbReference type="ChEBI" id="CHEBI:16217"/>
        <dbReference type="ChEBI" id="CHEBI:57783"/>
        <dbReference type="ChEBI" id="CHEBI:58349"/>
        <dbReference type="EC" id="1.1.1.47"/>
    </reaction>
</comment>
<comment type="cofactor">
    <cofactor evidence="1">
        <name>Zn(2+)</name>
        <dbReference type="ChEBI" id="CHEBI:29105"/>
    </cofactor>
</comment>
<comment type="similarity">
    <text evidence="1">Belongs to the zinc-containing alcohol dehydrogenase family. Glucose 1-dehydrogenase subfamily.</text>
</comment>
<feature type="chain" id="PRO_0000414834" description="Glucose 1-dehydrogenase 2">
    <location>
        <begin position="1"/>
        <end position="356"/>
    </location>
</feature>
<feature type="binding site" evidence="1">
    <location>
        <position position="38"/>
    </location>
    <ligand>
        <name>Zn(2+)</name>
        <dbReference type="ChEBI" id="CHEBI:29105"/>
        <note>catalytic</note>
    </ligand>
</feature>
<feature type="binding site" evidence="1">
    <location>
        <position position="40"/>
    </location>
    <ligand>
        <name>substrate</name>
    </ligand>
</feature>
<feature type="binding site" evidence="1">
    <location>
        <position position="64"/>
    </location>
    <ligand>
        <name>Zn(2+)</name>
        <dbReference type="ChEBI" id="CHEBI:29105"/>
        <note>catalytic</note>
    </ligand>
</feature>
<feature type="binding site" evidence="1">
    <location>
        <position position="65"/>
    </location>
    <ligand>
        <name>Zn(2+)</name>
        <dbReference type="ChEBI" id="CHEBI:29105"/>
        <note>catalytic</note>
    </ligand>
</feature>
<feature type="binding site" evidence="1">
    <location>
        <position position="114"/>
    </location>
    <ligand>
        <name>substrate</name>
    </ligand>
</feature>
<feature type="binding site" evidence="1">
    <location>
        <position position="150"/>
    </location>
    <ligand>
        <name>substrate</name>
    </ligand>
</feature>
<feature type="binding site" evidence="1">
    <location>
        <position position="150"/>
    </location>
    <ligand>
        <name>Zn(2+)</name>
        <dbReference type="ChEBI" id="CHEBI:29105"/>
        <note>catalytic</note>
    </ligand>
</feature>
<feature type="binding site" evidence="1">
    <location>
        <begin position="181"/>
        <end position="184"/>
    </location>
    <ligand>
        <name>NADP(+)</name>
        <dbReference type="ChEBI" id="CHEBI:58349"/>
    </ligand>
</feature>
<feature type="binding site" evidence="1">
    <location>
        <begin position="206"/>
        <end position="207"/>
    </location>
    <ligand>
        <name>NADP(+)</name>
        <dbReference type="ChEBI" id="CHEBI:58349"/>
    </ligand>
</feature>
<feature type="binding site" evidence="1">
    <location>
        <begin position="301"/>
        <end position="303"/>
    </location>
    <ligand>
        <name>NADP(+)</name>
        <dbReference type="ChEBI" id="CHEBI:58349"/>
    </ligand>
</feature>
<feature type="binding site" evidence="1">
    <location>
        <position position="303"/>
    </location>
    <ligand>
        <name>substrate</name>
    </ligand>
</feature>
<geneLocation type="plasmid">
    <name>pHTUR01</name>
</geneLocation>
<name>GLCD2_HALTV</name>
<gene>
    <name evidence="1" type="primary">gdh2</name>
    <name type="ordered locus">Htur_4392</name>
</gene>
<proteinExistence type="inferred from homology"/>
<protein>
    <recommendedName>
        <fullName evidence="1">Glucose 1-dehydrogenase 2</fullName>
        <shortName evidence="1">GDH 2</shortName>
        <shortName evidence="1">GlcDH 2</shortName>
        <ecNumber evidence="1">1.1.1.47</ecNumber>
    </recommendedName>
</protein>
<organism>
    <name type="scientific">Haloterrigena turkmenica (strain ATCC 51198 / DSM 5511 / JCM 9101 / NCIMB 13204 / VKM B-1734 / 4k)</name>
    <name type="common">Halococcus turkmenicus</name>
    <dbReference type="NCBI Taxonomy" id="543526"/>
    <lineage>
        <taxon>Archaea</taxon>
        <taxon>Methanobacteriati</taxon>
        <taxon>Methanobacteriota</taxon>
        <taxon>Stenosarchaea group</taxon>
        <taxon>Halobacteria</taxon>
        <taxon>Halobacteriales</taxon>
        <taxon>Natrialbaceae</taxon>
        <taxon>Haloterrigena</taxon>
    </lineage>
</organism>
<reference key="1">
    <citation type="journal article" date="2010" name="Stand. Genomic Sci.">
        <title>Complete genome sequence of Haloterrigena turkmenica type strain (4k).</title>
        <authorList>
            <person name="Saunders E."/>
            <person name="Tindall B.J."/>
            <person name="Fahnrich R."/>
            <person name="Lapidus A."/>
            <person name="Copeland A."/>
            <person name="Del Rio T.G."/>
            <person name="Lucas S."/>
            <person name="Chen F."/>
            <person name="Tice H."/>
            <person name="Cheng J.F."/>
            <person name="Han C."/>
            <person name="Detter J.C."/>
            <person name="Bruce D."/>
            <person name="Goodwin L."/>
            <person name="Chain P."/>
            <person name="Pitluck S."/>
            <person name="Pati A."/>
            <person name="Ivanova N."/>
            <person name="Mavromatis K."/>
            <person name="Chen A."/>
            <person name="Palaniappan K."/>
            <person name="Land M."/>
            <person name="Hauser L."/>
            <person name="Chang Y.J."/>
            <person name="Jeffries C.D."/>
            <person name="Brettin T."/>
            <person name="Rohde M."/>
            <person name="Goker M."/>
            <person name="Bristow J."/>
            <person name="Eisen J.A."/>
            <person name="Markowitz V."/>
            <person name="Hugenholtz P."/>
            <person name="Klenk H.P."/>
            <person name="Kyrpides N.C."/>
        </authorList>
    </citation>
    <scope>NUCLEOTIDE SEQUENCE [LARGE SCALE GENOMIC DNA]</scope>
    <source>
        <strain>ATCC 51198 / DSM 5511 / JCM 9101 / NCIMB 13204 / VKM B-1734 / 4k</strain>
    </source>
</reference>
<evidence type="ECO:0000255" key="1">
    <source>
        <dbReference type="HAMAP-Rule" id="MF_02127"/>
    </source>
</evidence>
<accession>D2S1F7</accession>
<dbReference type="EC" id="1.1.1.47" evidence="1"/>
<dbReference type="EMBL" id="CP001861">
    <property type="protein sequence ID" value="ADB63204.1"/>
    <property type="molecule type" value="Genomic_DNA"/>
</dbReference>
<dbReference type="RefSeq" id="WP_012945448.1">
    <property type="nucleotide sequence ID" value="NC_013744.1"/>
</dbReference>
<dbReference type="SMR" id="D2S1F7"/>
<dbReference type="GeneID" id="8745020"/>
<dbReference type="KEGG" id="htu:Htur_4392"/>
<dbReference type="HOGENOM" id="CLU_026673_1_0_2"/>
<dbReference type="OrthoDB" id="41394at2157"/>
<dbReference type="Proteomes" id="UP000001903">
    <property type="component" value="Plasmid pHTUR01"/>
</dbReference>
<dbReference type="GO" id="GO:0005536">
    <property type="term" value="F:D-glucose binding"/>
    <property type="evidence" value="ECO:0007669"/>
    <property type="project" value="UniProtKB-UniRule"/>
</dbReference>
<dbReference type="GO" id="GO:0047934">
    <property type="term" value="F:glucose 1-dehydrogenase (NAD+) activity"/>
    <property type="evidence" value="ECO:0007669"/>
    <property type="project" value="RHEA"/>
</dbReference>
<dbReference type="GO" id="GO:0047935">
    <property type="term" value="F:glucose 1-dehydrogenase (NADP+) activity"/>
    <property type="evidence" value="ECO:0007669"/>
    <property type="project" value="RHEA"/>
</dbReference>
<dbReference type="GO" id="GO:0070403">
    <property type="term" value="F:NAD+ binding"/>
    <property type="evidence" value="ECO:0007669"/>
    <property type="project" value="UniProtKB-UniRule"/>
</dbReference>
<dbReference type="GO" id="GO:0070401">
    <property type="term" value="F:NADP+ binding"/>
    <property type="evidence" value="ECO:0007669"/>
    <property type="project" value="UniProtKB-UniRule"/>
</dbReference>
<dbReference type="GO" id="GO:0008270">
    <property type="term" value="F:zinc ion binding"/>
    <property type="evidence" value="ECO:0007669"/>
    <property type="project" value="UniProtKB-UniRule"/>
</dbReference>
<dbReference type="GO" id="GO:0019595">
    <property type="term" value="P:non-phosphorylated glucose catabolic process"/>
    <property type="evidence" value="ECO:0007669"/>
    <property type="project" value="UniProtKB-UniRule"/>
</dbReference>
<dbReference type="CDD" id="cd08230">
    <property type="entry name" value="glucose_DH"/>
    <property type="match status" value="1"/>
</dbReference>
<dbReference type="Gene3D" id="3.90.180.10">
    <property type="entry name" value="Medium-chain alcohol dehydrogenases, catalytic domain"/>
    <property type="match status" value="1"/>
</dbReference>
<dbReference type="Gene3D" id="3.40.50.720">
    <property type="entry name" value="NAD(P)-binding Rossmann-like Domain"/>
    <property type="match status" value="1"/>
</dbReference>
<dbReference type="HAMAP" id="MF_02127">
    <property type="entry name" value="Glucose_DH"/>
    <property type="match status" value="1"/>
</dbReference>
<dbReference type="InterPro" id="IPR013154">
    <property type="entry name" value="ADH-like_N"/>
</dbReference>
<dbReference type="InterPro" id="IPR026583">
    <property type="entry name" value="Glc_1-DH_arc"/>
</dbReference>
<dbReference type="InterPro" id="IPR031640">
    <property type="entry name" value="Glu_dehyd_C"/>
</dbReference>
<dbReference type="InterPro" id="IPR011032">
    <property type="entry name" value="GroES-like_sf"/>
</dbReference>
<dbReference type="InterPro" id="IPR036291">
    <property type="entry name" value="NAD(P)-bd_dom_sf"/>
</dbReference>
<dbReference type="PANTHER" id="PTHR43189:SF2">
    <property type="entry name" value="GLUCOSE 1-DEHYDROGENASE"/>
    <property type="match status" value="1"/>
</dbReference>
<dbReference type="PANTHER" id="PTHR43189">
    <property type="entry name" value="ZINC-TYPE ALCOHOL DEHYDROGENASE-LIKE PROTEIN C1198.01-RELATED"/>
    <property type="match status" value="1"/>
</dbReference>
<dbReference type="Pfam" id="PF08240">
    <property type="entry name" value="ADH_N"/>
    <property type="match status" value="1"/>
</dbReference>
<dbReference type="Pfam" id="PF16912">
    <property type="entry name" value="Glu_dehyd_C"/>
    <property type="match status" value="1"/>
</dbReference>
<dbReference type="SUPFAM" id="SSF50129">
    <property type="entry name" value="GroES-like"/>
    <property type="match status" value="1"/>
</dbReference>
<dbReference type="SUPFAM" id="SSF51735">
    <property type="entry name" value="NAD(P)-binding Rossmann-fold domains"/>
    <property type="match status" value="1"/>
</dbReference>